<proteinExistence type="inferred from homology"/>
<evidence type="ECO:0000255" key="1">
    <source>
        <dbReference type="HAMAP-Rule" id="MF_00365"/>
    </source>
</evidence>
<comment type="function">
    <text evidence="1">The RecF protein is involved in DNA metabolism; it is required for DNA replication and normal SOS inducibility. RecF binds preferentially to single-stranded, linear DNA. It also seems to bind ATP.</text>
</comment>
<comment type="subcellular location">
    <subcellularLocation>
        <location evidence="1">Cytoplasm</location>
    </subcellularLocation>
</comment>
<comment type="similarity">
    <text evidence="1">Belongs to the RecF family.</text>
</comment>
<reference key="1">
    <citation type="journal article" date="2008" name="PLoS Genet.">
        <title>Complete genome sequence of the complex carbohydrate-degrading marine bacterium, Saccharophagus degradans strain 2-40 T.</title>
        <authorList>
            <person name="Weiner R.M."/>
            <person name="Taylor L.E. II"/>
            <person name="Henrissat B."/>
            <person name="Hauser L."/>
            <person name="Land M."/>
            <person name="Coutinho P.M."/>
            <person name="Rancurel C."/>
            <person name="Saunders E.H."/>
            <person name="Longmire A.G."/>
            <person name="Zhang H."/>
            <person name="Bayer E.A."/>
            <person name="Gilbert H.J."/>
            <person name="Larimer F."/>
            <person name="Zhulin I.B."/>
            <person name="Ekborg N.A."/>
            <person name="Lamed R."/>
            <person name="Richardson P.M."/>
            <person name="Borovok I."/>
            <person name="Hutcheson S."/>
        </authorList>
    </citation>
    <scope>NUCLEOTIDE SEQUENCE [LARGE SCALE GENOMIC DNA]</scope>
    <source>
        <strain>2-40 / ATCC 43961 / DSM 17024</strain>
    </source>
</reference>
<dbReference type="EMBL" id="CP000282">
    <property type="protein sequence ID" value="ABD79267.1"/>
    <property type="molecule type" value="Genomic_DNA"/>
</dbReference>
<dbReference type="RefSeq" id="WP_011466491.1">
    <property type="nucleotide sequence ID" value="NC_007912.1"/>
</dbReference>
<dbReference type="SMR" id="Q21PV3"/>
<dbReference type="STRING" id="203122.Sde_0003"/>
<dbReference type="GeneID" id="98611723"/>
<dbReference type="KEGG" id="sde:Sde_0003"/>
<dbReference type="eggNOG" id="COG1195">
    <property type="taxonomic scope" value="Bacteria"/>
</dbReference>
<dbReference type="HOGENOM" id="CLU_040267_0_0_6"/>
<dbReference type="OrthoDB" id="9803889at2"/>
<dbReference type="Proteomes" id="UP000001947">
    <property type="component" value="Chromosome"/>
</dbReference>
<dbReference type="GO" id="GO:0005737">
    <property type="term" value="C:cytoplasm"/>
    <property type="evidence" value="ECO:0007669"/>
    <property type="project" value="UniProtKB-SubCell"/>
</dbReference>
<dbReference type="GO" id="GO:0005524">
    <property type="term" value="F:ATP binding"/>
    <property type="evidence" value="ECO:0007669"/>
    <property type="project" value="UniProtKB-UniRule"/>
</dbReference>
<dbReference type="GO" id="GO:0003697">
    <property type="term" value="F:single-stranded DNA binding"/>
    <property type="evidence" value="ECO:0007669"/>
    <property type="project" value="UniProtKB-UniRule"/>
</dbReference>
<dbReference type="GO" id="GO:0006260">
    <property type="term" value="P:DNA replication"/>
    <property type="evidence" value="ECO:0007669"/>
    <property type="project" value="UniProtKB-UniRule"/>
</dbReference>
<dbReference type="GO" id="GO:0000731">
    <property type="term" value="P:DNA synthesis involved in DNA repair"/>
    <property type="evidence" value="ECO:0007669"/>
    <property type="project" value="TreeGrafter"/>
</dbReference>
<dbReference type="GO" id="GO:0006302">
    <property type="term" value="P:double-strand break repair"/>
    <property type="evidence" value="ECO:0007669"/>
    <property type="project" value="TreeGrafter"/>
</dbReference>
<dbReference type="GO" id="GO:0009432">
    <property type="term" value="P:SOS response"/>
    <property type="evidence" value="ECO:0007669"/>
    <property type="project" value="UniProtKB-UniRule"/>
</dbReference>
<dbReference type="Gene3D" id="3.40.50.300">
    <property type="entry name" value="P-loop containing nucleotide triphosphate hydrolases"/>
    <property type="match status" value="1"/>
</dbReference>
<dbReference type="Gene3D" id="1.20.1050.90">
    <property type="entry name" value="RecF/RecN/SMC, N-terminal domain"/>
    <property type="match status" value="1"/>
</dbReference>
<dbReference type="HAMAP" id="MF_00365">
    <property type="entry name" value="RecF"/>
    <property type="match status" value="1"/>
</dbReference>
<dbReference type="InterPro" id="IPR001238">
    <property type="entry name" value="DNA-binding_RecF"/>
</dbReference>
<dbReference type="InterPro" id="IPR018078">
    <property type="entry name" value="DNA-binding_RecF_CS"/>
</dbReference>
<dbReference type="InterPro" id="IPR027417">
    <property type="entry name" value="P-loop_NTPase"/>
</dbReference>
<dbReference type="InterPro" id="IPR003395">
    <property type="entry name" value="RecF/RecN/SMC_N"/>
</dbReference>
<dbReference type="InterPro" id="IPR042174">
    <property type="entry name" value="RecF_2"/>
</dbReference>
<dbReference type="NCBIfam" id="TIGR00611">
    <property type="entry name" value="recf"/>
    <property type="match status" value="1"/>
</dbReference>
<dbReference type="PANTHER" id="PTHR32182">
    <property type="entry name" value="DNA REPLICATION AND REPAIR PROTEIN RECF"/>
    <property type="match status" value="1"/>
</dbReference>
<dbReference type="PANTHER" id="PTHR32182:SF0">
    <property type="entry name" value="DNA REPLICATION AND REPAIR PROTEIN RECF"/>
    <property type="match status" value="1"/>
</dbReference>
<dbReference type="Pfam" id="PF02463">
    <property type="entry name" value="SMC_N"/>
    <property type="match status" value="1"/>
</dbReference>
<dbReference type="SUPFAM" id="SSF52540">
    <property type="entry name" value="P-loop containing nucleoside triphosphate hydrolases"/>
    <property type="match status" value="1"/>
</dbReference>
<dbReference type="PROSITE" id="PS00617">
    <property type="entry name" value="RECF_1"/>
    <property type="match status" value="1"/>
</dbReference>
<feature type="chain" id="PRO_1000048567" description="DNA replication and repair protein RecF">
    <location>
        <begin position="1"/>
        <end position="367"/>
    </location>
</feature>
<feature type="binding site" evidence="1">
    <location>
        <begin position="31"/>
        <end position="38"/>
    </location>
    <ligand>
        <name>ATP</name>
        <dbReference type="ChEBI" id="CHEBI:30616"/>
    </ligand>
</feature>
<gene>
    <name evidence="1" type="primary">recF</name>
    <name type="ordered locus">Sde_0003</name>
</gene>
<organism>
    <name type="scientific">Saccharophagus degradans (strain 2-40 / ATCC 43961 / DSM 17024)</name>
    <dbReference type="NCBI Taxonomy" id="203122"/>
    <lineage>
        <taxon>Bacteria</taxon>
        <taxon>Pseudomonadati</taxon>
        <taxon>Pseudomonadota</taxon>
        <taxon>Gammaproteobacteria</taxon>
        <taxon>Cellvibrionales</taxon>
        <taxon>Cellvibrionaceae</taxon>
        <taxon>Saccharophagus</taxon>
    </lineage>
</organism>
<keyword id="KW-0067">ATP-binding</keyword>
<keyword id="KW-0963">Cytoplasm</keyword>
<keyword id="KW-0227">DNA damage</keyword>
<keyword id="KW-0234">DNA repair</keyword>
<keyword id="KW-0235">DNA replication</keyword>
<keyword id="KW-0238">DNA-binding</keyword>
<keyword id="KW-0547">Nucleotide-binding</keyword>
<keyword id="KW-1185">Reference proteome</keyword>
<keyword id="KW-0742">SOS response</keyword>
<name>RECF_SACD2</name>
<sequence>MPHLSNLKVQQFRNLGLVDITPSPTLNLVYGENGSGKTSLLEAISVLAHCRSFRTHKYRRLIQDTTTAFTVFATVEGSDAFKVGVQREWSGKSTAKLDGLSAKSSAQLATNLPVQIIDAHTFALLEGGSKARRKFFDWLVFHVKHEFKTAWANYVKCVKQRNSLLRHDKIAYSDLRPWDEQIAGLAATIDECRVECITPLIQAFKALMGECKFADNVDLTLAYQPGWKEGELSFPKQLEQAFARDRKLGYTILGPHKSDLKITANGSPAVEVLSRGQQKAVINALHIAEAQVYKTQIGRTPVFLLDDMPSELDANHIAILSGWLSNLGAQVFVTGVDANKLASVWPLQKNEAIKMFHVKQGEVTVSQ</sequence>
<protein>
    <recommendedName>
        <fullName evidence="1">DNA replication and repair protein RecF</fullName>
    </recommendedName>
</protein>
<accession>Q21PV3</accession>